<gene>
    <name evidence="4" type="primary">elcE</name>
    <name type="ORF">SNOG_08608</name>
</gene>
<protein>
    <recommendedName>
        <fullName evidence="4">FAD-dependent monooxygenase elcE</fullName>
        <ecNumber evidence="6">1.-.-.-</ecNumber>
    </recommendedName>
    <alternativeName>
        <fullName evidence="4">Elsinochrome C biosynthesis cluster protein E</fullName>
    </alternativeName>
</protein>
<reference key="1">
    <citation type="journal article" date="2007" name="Plant Cell">
        <title>Dothideomycete-plant interactions illuminated by genome sequencing and EST analysis of the wheat pathogen Stagonospora nodorum.</title>
        <authorList>
            <person name="Hane J.K."/>
            <person name="Lowe R.G.T."/>
            <person name="Solomon P.S."/>
            <person name="Tan K.-C."/>
            <person name="Schoch C.L."/>
            <person name="Spatafora J.W."/>
            <person name="Crous P.W."/>
            <person name="Kodira C.D."/>
            <person name="Birren B.W."/>
            <person name="Galagan J.E."/>
            <person name="Torriani S.F.F."/>
            <person name="McDonald B.A."/>
            <person name="Oliver R.P."/>
        </authorList>
    </citation>
    <scope>NUCLEOTIDE SEQUENCE [LARGE SCALE GENOMIC DNA]</scope>
    <source>
        <strain>SN15 / ATCC MYA-4574 / FGSC 10173</strain>
    </source>
</reference>
<reference key="2">
    <citation type="journal article" date="2017" name="Environ. Microbiol.">
        <title>Functional genomics-guided discovery of a light-activated phytotoxin in the wheat pathogen Parastagonospora nodorum via pathway activation.</title>
        <authorList>
            <person name="Chooi Y.H."/>
            <person name="Zhang G."/>
            <person name="Hu J."/>
            <person name="Muria-Gonzalez M.J."/>
            <person name="Tran P.N."/>
            <person name="Pettitt A."/>
            <person name="Maier A.G."/>
            <person name="Barrow R.A."/>
            <person name="Solomon P.S."/>
        </authorList>
    </citation>
    <scope>INDUCTION</scope>
    <scope>FUNCTION</scope>
    <scope>PATHWAY</scope>
</reference>
<reference key="3">
    <citation type="journal article" date="2019" name="Chem. Sci.">
        <title>Heterologous biosynthesis of elsinochrome A sheds light on the formation of the photosensitive perylenequinone system.</title>
        <authorList>
            <person name="Hu J."/>
            <person name="Sarrami F."/>
            <person name="Li H."/>
            <person name="Zhang G."/>
            <person name="Stubbs K.A."/>
            <person name="Lacey E."/>
            <person name="Stewart S.G."/>
            <person name="Karton A."/>
            <person name="Piggott A.M."/>
            <person name="Chooi Y.H."/>
        </authorList>
    </citation>
    <scope>FUNCTION</scope>
    <scope>CATALYTIC ACTIVITY</scope>
    <scope>PATHWAY</scope>
</reference>
<sequence length="332" mass="37705">GVSYFSPRFGFTCNMVENFEVVLANGDIVNANATSHRKLWKALRGGSNNFGIVTAITLRVFSQGKFWGGQTFHPISTRKDHFHALENLIAAVPYDKYAHFINTIVITNASYGNWFIGNSLQYTKSDPPTPFPETFKPFTDIPRVALFPGAPDNTLRVDNHTAFTLEYAALNVYPKRWQFATISFGNSAEMMEDFFQMANETIQPFLTLPGFLLSVAYQPLPTLMSERYGEVDSLGPIQTQGNMFYIHWAMSVDGSEVETDRKFEKVTRDLFQRAEAKAREKGLRRDFLQLTSNGTLKELWRVSKEYDPTGMFQKQVPGGFKLSEMDEDSMEL</sequence>
<proteinExistence type="evidence at protein level"/>
<dbReference type="EC" id="1.-.-.-" evidence="6"/>
<dbReference type="EMBL" id="CH445337">
    <property type="protein sequence ID" value="EAT83776.2"/>
    <property type="molecule type" value="Genomic_DNA"/>
</dbReference>
<dbReference type="RefSeq" id="XP_001798917.1">
    <property type="nucleotide sequence ID" value="XM_001798865.1"/>
</dbReference>
<dbReference type="SMR" id="Q0UI06"/>
<dbReference type="GeneID" id="5975816"/>
<dbReference type="KEGG" id="pno:SNOG_08608"/>
<dbReference type="VEuPathDB" id="FungiDB:JI435_306110"/>
<dbReference type="InParanoid" id="Q0UI06"/>
<dbReference type="Proteomes" id="UP000001055">
    <property type="component" value="Unassembled WGS sequence"/>
</dbReference>
<dbReference type="GO" id="GO:0050660">
    <property type="term" value="F:flavin adenine dinucleotide binding"/>
    <property type="evidence" value="ECO:0007669"/>
    <property type="project" value="InterPro"/>
</dbReference>
<dbReference type="GO" id="GO:0016491">
    <property type="term" value="F:oxidoreductase activity"/>
    <property type="evidence" value="ECO:0007669"/>
    <property type="project" value="UniProtKB-KW"/>
</dbReference>
<dbReference type="Gene3D" id="3.30.465.10">
    <property type="match status" value="1"/>
</dbReference>
<dbReference type="InterPro" id="IPR036318">
    <property type="entry name" value="FAD-bd_PCMH-like_sf"/>
</dbReference>
<dbReference type="InterPro" id="IPR016169">
    <property type="entry name" value="FAD-bd_PCMH_sub2"/>
</dbReference>
<dbReference type="InterPro" id="IPR050416">
    <property type="entry name" value="FAD-linked_Oxidoreductase"/>
</dbReference>
<dbReference type="PANTHER" id="PTHR42973">
    <property type="entry name" value="BINDING OXIDOREDUCTASE, PUTATIVE (AFU_ORTHOLOGUE AFUA_1G17690)-RELATED"/>
    <property type="match status" value="1"/>
</dbReference>
<dbReference type="PANTHER" id="PTHR42973:SF22">
    <property type="entry name" value="FAD-BINDING PCMH-TYPE DOMAIN-CONTAINING PROTEIN-RELATED"/>
    <property type="match status" value="1"/>
</dbReference>
<dbReference type="SUPFAM" id="SSF56176">
    <property type="entry name" value="FAD-binding/transporter-associated domain-like"/>
    <property type="match status" value="1"/>
</dbReference>
<accession>Q0UI06</accession>
<organism>
    <name type="scientific">Phaeosphaeria nodorum (strain SN15 / ATCC MYA-4574 / FGSC 10173)</name>
    <name type="common">Glume blotch fungus</name>
    <name type="synonym">Parastagonospora nodorum</name>
    <dbReference type="NCBI Taxonomy" id="321614"/>
    <lineage>
        <taxon>Eukaryota</taxon>
        <taxon>Fungi</taxon>
        <taxon>Dikarya</taxon>
        <taxon>Ascomycota</taxon>
        <taxon>Pezizomycotina</taxon>
        <taxon>Dothideomycetes</taxon>
        <taxon>Pleosporomycetidae</taxon>
        <taxon>Pleosporales</taxon>
        <taxon>Pleosporineae</taxon>
        <taxon>Phaeosphaeriaceae</taxon>
        <taxon>Parastagonospora</taxon>
    </lineage>
</organism>
<keyword id="KW-0274">FAD</keyword>
<keyword id="KW-0285">Flavoprotein</keyword>
<keyword id="KW-0560">Oxidoreductase</keyword>
<comment type="function">
    <text evidence="1 2 3 7">FAD-dependent monooxygenase; part of the gene cluster that mediates the biosynthesis of elsinochrome C, a perelyenequinone phytotoxin structurally similar to cercosporin (PubMed:28251756, PubMed:30809363). The first step of elsinochrome C biosynthesis is performed by the polyketide synthase elcA which catalyzes the formation of nor-toralactone (PubMed:28251756, PubMed:30809363). The starter unit acyltransferase (SAT) domain of elcA initiates polyketide extension by the selective utilization of acetyl-CoA, which is elongated to the heptaketide in the beta-ketoacyl synthase (KS) domain by successive condensations with six malonyl units introduced by the malonyl acyltransferase (MAT) domain (By similarity). The product template (PT) domain catalyzes C4-C9 and C2-C11 aldol cyclizations and dehydrations to a trihydroxynaphthalene, which is thought to be delivered to the thioesterase (TE) domain for product release (By similarity). The bifunctional enzyme elcB then methylates nor-toralactone to toralactone before conducting an unusual oxidative aromatic ring opening (PubMed:28251756, PubMed:30809363). The next step in perylenequinone biosynthesis is an O-methylation at the nascent OH-6 of the elcB product performed by the O-methyltransferase elcD (PubMed:30809363). The oxidative coupling of the two monomeric naphthol units in perylenequinone biosynthesis is catalyzed by the FAD-dependent monooxygenase elcE and the multicopper oxidase elcG (PubMed:30809363). ElcG might catalyze the first intermolecular coupling in a regio- and stereo-selective manner via a phenol radical coupling mechanism and the elcE could forge the second C-C bond intramolecularly via a hydride transfer mechanism (PubMed:30809363). The fasciclin domain-containing protein elcF might also play a role duting this step (Probable). The last piece of the puzzle in the biosynthesis of elsinochrome C is the additional annulation by enolate coupling to afford the dihydrobenzo(ghi)perylenequinone system, catalyzed by the FAD-dependent monooxygenase elcH (PubMed:30809363).</text>
</comment>
<comment type="pathway">
    <text evidence="2 3">Secondary metabolite biosynthesis.</text>
</comment>
<comment type="induction">
    <text evidence="2">Expression is up-regulated during the late stage of P.nodorum wheat leaf infection and is controlled by the cluster specific transporter elcR.</text>
</comment>
<comment type="similarity">
    <text evidence="5">Belongs to the oxygen-dependent FAD-linked oxidoreductase family.</text>
</comment>
<comment type="caution">
    <text evidence="5">The sequence probably misses the N-terminus part since the N-terminal FAD-binding PCMH-type is absent. The correct gene model with the complete protein sequence could not be recovered from the submitted genomic sequence.</text>
</comment>
<feature type="chain" id="PRO_0000449870" description="FAD-dependent monooxygenase elcE">
    <location>
        <begin position="1" status="less than"/>
        <end position="332"/>
    </location>
</feature>
<feature type="non-terminal residue">
    <location>
        <position position="1"/>
    </location>
</feature>
<evidence type="ECO:0000250" key="1">
    <source>
        <dbReference type="UniProtKB" id="Q6DQW3"/>
    </source>
</evidence>
<evidence type="ECO:0000269" key="2">
    <source>
    </source>
</evidence>
<evidence type="ECO:0000269" key="3">
    <source>
    </source>
</evidence>
<evidence type="ECO:0000303" key="4">
    <source>
    </source>
</evidence>
<evidence type="ECO:0000305" key="5"/>
<evidence type="ECO:0000305" key="6">
    <source>
    </source>
</evidence>
<evidence type="ECO:0000305" key="7">
    <source>
    </source>
</evidence>
<name>ELCE_PHANO</name>